<keyword id="KW-0067">ATP-binding</keyword>
<keyword id="KW-0460">Magnesium</keyword>
<keyword id="KW-0472">Membrane</keyword>
<keyword id="KW-0479">Metal-binding</keyword>
<keyword id="KW-0547">Nucleotide-binding</keyword>
<keyword id="KW-0597">Phosphoprotein</keyword>
<keyword id="KW-1278">Translocase</keyword>
<keyword id="KW-0812">Transmembrane</keyword>
<keyword id="KW-1133">Transmembrane helix</keyword>
<sequence>MRVSSIEAEMENPIDVDKTDVEGELKIKQVTLLRENIVKKIVFFLVAIFCSDRPSVLKKVFYEEVSKQEEATHVYVLASDLTDYIEEASLKENPEEGGEKSIYFVNRLQKYIYHKKQNKFRAIEYFIQGKSYSEIANNKPLATGRVDQLLAYYGKSEIEINVPSFLTLMWREFKKPINFLLYFGIIVWGIEQMYVSTAITVVFTTTINSLICIYIRGVMQKLKDACLNNTSVIVQRHNGQGYQEITVASNMIAPGDIVLFKREVTLPFDCVILEGSCQVTEANITGENVAIGKCQIPTDHHNDIFKYESSKSHTLFQGTQLMKIEDDILKVIVVRTGFGSYKGQIIRALLYPKPFNKKFQQQAVKLTILMATLLLIGFLSTLSRLLDIELPPLFIAFRFLDILIYSAPPGMPMLIAITNFVGLKRLKNNQILGQDPNSASQAGRIQTLCFDKTGTLTEDKVDLIGYQLKGQNQTFDKIQCQDPNNISIEHKLFSICHEVTKINNKLLGDLMDVKMAEFSTLDIDYDHEAKQHYSKSGNKRFYCIQVNQFHSEYQSMSVVCKEVDMITKEFKHYFFIKGSPEKIQSLSHVQSSEKAQLSTLINEGYRILGFGYKEIPQSEIDAFLDLSREQQEANVQSLGFLIYKNNLKPDTQEVIKEFKEACYNIKVISGDNPITTLKISQELEIVNRKNPTVIINFEETENVKSHLIITEIQPDNSTQVIDFSSAQNEQDYINKQMSYCCDAFLNNKSFCFSGKAHYYFQLKAKTDHISFKPEWVKMQDKSVQKIISFYQMLIINTNVFARTQPEQKQTIVRLLKESDQIVCMVGDGANDCSAIREADVGISFAEADGQFSSSYVSLSTSLSCVKRVLLEGRVNLSNSVEIFKGYLQVALLRYLGFLTLAYFYSSYSSGQMDWQALASGYFLVYLILGCNTPLKKLEKSVFDDNLFSIYNVTSVLFGFTLHILSIVGCVESLHASPIYKEVNSLDAENNFQFETQHNTVLNFNILINFFYVIISNHIGKPMKDRYYKNTIAIYYDLGLIYTCKCMILQVLLILEHTHHGLIFLILLLDQEFSSSLTVQVYFSLPMNLFLPEEFSLNFTQEVKKEKELLICNSSSTILEVDYNLRLNYFQQNF</sequence>
<dbReference type="EC" id="7.2.2.-"/>
<dbReference type="EMBL" id="U41063">
    <property type="protein sequence ID" value="AAB08071.1"/>
    <property type="molecule type" value="mRNA"/>
</dbReference>
<dbReference type="PIR" id="T30302">
    <property type="entry name" value="T30302"/>
</dbReference>
<dbReference type="SMR" id="Q95050"/>
<dbReference type="GO" id="GO:0016020">
    <property type="term" value="C:membrane"/>
    <property type="evidence" value="ECO:0007669"/>
    <property type="project" value="UniProtKB-SubCell"/>
</dbReference>
<dbReference type="GO" id="GO:0005524">
    <property type="term" value="F:ATP binding"/>
    <property type="evidence" value="ECO:0007669"/>
    <property type="project" value="UniProtKB-KW"/>
</dbReference>
<dbReference type="GO" id="GO:0016887">
    <property type="term" value="F:ATP hydrolysis activity"/>
    <property type="evidence" value="ECO:0007669"/>
    <property type="project" value="InterPro"/>
</dbReference>
<dbReference type="GO" id="GO:0019829">
    <property type="term" value="F:ATPase-coupled monoatomic cation transmembrane transporter activity"/>
    <property type="evidence" value="ECO:0007669"/>
    <property type="project" value="TreeGrafter"/>
</dbReference>
<dbReference type="GO" id="GO:0046872">
    <property type="term" value="F:metal ion binding"/>
    <property type="evidence" value="ECO:0007669"/>
    <property type="project" value="UniProtKB-KW"/>
</dbReference>
<dbReference type="GO" id="GO:0140358">
    <property type="term" value="F:P-type transmembrane transporter activity"/>
    <property type="evidence" value="ECO:0007669"/>
    <property type="project" value="InterPro"/>
</dbReference>
<dbReference type="CDD" id="cd02082">
    <property type="entry name" value="P-type_ATPase_cation"/>
    <property type="match status" value="1"/>
</dbReference>
<dbReference type="Gene3D" id="3.40.1110.10">
    <property type="entry name" value="Calcium-transporting ATPase, cytoplasmic domain N"/>
    <property type="match status" value="1"/>
</dbReference>
<dbReference type="Gene3D" id="2.70.150.10">
    <property type="entry name" value="Calcium-transporting ATPase, cytoplasmic transduction domain A"/>
    <property type="match status" value="1"/>
</dbReference>
<dbReference type="Gene3D" id="3.40.50.1000">
    <property type="entry name" value="HAD superfamily/HAD-like"/>
    <property type="match status" value="1"/>
</dbReference>
<dbReference type="InterPro" id="IPR023299">
    <property type="entry name" value="ATPase_P-typ_cyto_dom_N"/>
</dbReference>
<dbReference type="InterPro" id="IPR018303">
    <property type="entry name" value="ATPase_P-typ_P_site"/>
</dbReference>
<dbReference type="InterPro" id="IPR023298">
    <property type="entry name" value="ATPase_P-typ_TM_dom_sf"/>
</dbReference>
<dbReference type="InterPro" id="IPR008250">
    <property type="entry name" value="ATPase_P-typ_transduc_dom_A_sf"/>
</dbReference>
<dbReference type="InterPro" id="IPR036412">
    <property type="entry name" value="HAD-like_sf"/>
</dbReference>
<dbReference type="InterPro" id="IPR023214">
    <property type="entry name" value="HAD_sf"/>
</dbReference>
<dbReference type="InterPro" id="IPR006544">
    <property type="entry name" value="P-type_TPase_V"/>
</dbReference>
<dbReference type="InterPro" id="IPR001757">
    <property type="entry name" value="P_typ_ATPase"/>
</dbReference>
<dbReference type="InterPro" id="IPR044492">
    <property type="entry name" value="P_typ_ATPase_HD_dom"/>
</dbReference>
<dbReference type="NCBIfam" id="TIGR01494">
    <property type="entry name" value="ATPase_P-type"/>
    <property type="match status" value="2"/>
</dbReference>
<dbReference type="NCBIfam" id="TIGR01657">
    <property type="entry name" value="P-ATPase-V"/>
    <property type="match status" value="1"/>
</dbReference>
<dbReference type="PANTHER" id="PTHR45630:SF8">
    <property type="entry name" value="CATION-TRANSPORTING ATPASE"/>
    <property type="match status" value="1"/>
</dbReference>
<dbReference type="PANTHER" id="PTHR45630">
    <property type="entry name" value="CATION-TRANSPORTING ATPASE-RELATED"/>
    <property type="match status" value="1"/>
</dbReference>
<dbReference type="Pfam" id="PF00122">
    <property type="entry name" value="E1-E2_ATPase"/>
    <property type="match status" value="1"/>
</dbReference>
<dbReference type="PRINTS" id="PR00119">
    <property type="entry name" value="CATATPASE"/>
</dbReference>
<dbReference type="SFLD" id="SFLDG00002">
    <property type="entry name" value="C1.7:_P-type_atpase_like"/>
    <property type="match status" value="1"/>
</dbReference>
<dbReference type="SFLD" id="SFLDF00027">
    <property type="entry name" value="p-type_atpase"/>
    <property type="match status" value="1"/>
</dbReference>
<dbReference type="SUPFAM" id="SSF81653">
    <property type="entry name" value="Calcium ATPase, transduction domain A"/>
    <property type="match status" value="1"/>
</dbReference>
<dbReference type="SUPFAM" id="SSF81665">
    <property type="entry name" value="Calcium ATPase, transmembrane domain M"/>
    <property type="match status" value="1"/>
</dbReference>
<dbReference type="SUPFAM" id="SSF56784">
    <property type="entry name" value="HAD-like"/>
    <property type="match status" value="1"/>
</dbReference>
<dbReference type="SUPFAM" id="SSF81660">
    <property type="entry name" value="Metal cation-transporting ATPase, ATP-binding domain N"/>
    <property type="match status" value="1"/>
</dbReference>
<dbReference type="PROSITE" id="PS00154">
    <property type="entry name" value="ATPASE_E1_E2"/>
    <property type="match status" value="1"/>
</dbReference>
<proteinExistence type="evidence at transcript level"/>
<organism>
    <name type="scientific">Tetrahymena thermophila</name>
    <dbReference type="NCBI Taxonomy" id="5911"/>
    <lineage>
        <taxon>Eukaryota</taxon>
        <taxon>Sar</taxon>
        <taxon>Alveolata</taxon>
        <taxon>Ciliophora</taxon>
        <taxon>Intramacronucleata</taxon>
        <taxon>Oligohymenophorea</taxon>
        <taxon>Hymenostomatida</taxon>
        <taxon>Tetrahymenina</taxon>
        <taxon>Tetrahymenidae</taxon>
        <taxon>Tetrahymena</taxon>
    </lineage>
</organism>
<name>ATX9_TETTH</name>
<comment type="catalytic activity">
    <reaction>
        <text>ATP + H2O = ADP + phosphate + H(+)</text>
        <dbReference type="Rhea" id="RHEA:13065"/>
        <dbReference type="ChEBI" id="CHEBI:15377"/>
        <dbReference type="ChEBI" id="CHEBI:15378"/>
        <dbReference type="ChEBI" id="CHEBI:30616"/>
        <dbReference type="ChEBI" id="CHEBI:43474"/>
        <dbReference type="ChEBI" id="CHEBI:456216"/>
    </reaction>
</comment>
<comment type="subcellular location">
    <subcellularLocation>
        <location>Membrane</location>
        <topology>Multi-pass membrane protein</topology>
    </subcellularLocation>
</comment>
<comment type="similarity">
    <text evidence="3">Belongs to the cation transport ATPase (P-type) (TC 3.A.3) family. Type V subfamily.</text>
</comment>
<protein>
    <recommendedName>
        <fullName>Probable cation-transporting ATPase 9</fullName>
        <ecNumber>7.2.2.-</ecNumber>
    </recommendedName>
</protein>
<reference key="1">
    <citation type="journal article" date="1997" name="Ann. N. Y. Acad. Sci.">
        <title>P-type ATPases in Tetrahymena.</title>
        <authorList>
            <person name="Wang S."/>
            <person name="Gao D."/>
            <person name="Penny J."/>
            <person name="Krishna S."/>
            <person name="Takeyasu K."/>
        </authorList>
    </citation>
    <scope>NUCLEOTIDE SEQUENCE [MRNA]</scope>
    <source>
        <strain>CU428</strain>
    </source>
</reference>
<feature type="chain" id="PRO_0000046355" description="Probable cation-transporting ATPase 9">
    <location>
        <begin position="1"/>
        <end position="1133"/>
    </location>
</feature>
<feature type="topological domain" description="Cytoplasmic" evidence="2">
    <location>
        <begin position="1"/>
        <end position="6"/>
    </location>
</feature>
<feature type="transmembrane region" description="Helical" evidence="2">
    <location>
        <begin position="7"/>
        <end position="28"/>
    </location>
</feature>
<feature type="topological domain" description="Extracellular" evidence="2">
    <location>
        <begin position="29"/>
        <end position="34"/>
    </location>
</feature>
<feature type="transmembrane region" description="Helical" evidence="2">
    <location>
        <begin position="35"/>
        <end position="53"/>
    </location>
</feature>
<feature type="topological domain" description="Cytoplasmic" evidence="2">
    <location>
        <begin position="54"/>
        <end position="167"/>
    </location>
</feature>
<feature type="transmembrane region" description="Helical" evidence="2">
    <location>
        <begin position="168"/>
        <end position="190"/>
    </location>
</feature>
<feature type="topological domain" description="Extracellular" evidence="2">
    <location>
        <begin position="191"/>
        <end position="193"/>
    </location>
</feature>
<feature type="transmembrane region" description="Helical" evidence="2">
    <location>
        <begin position="194"/>
        <end position="212"/>
    </location>
</feature>
<feature type="topological domain" description="Cytoplasmic" evidence="2">
    <location>
        <begin position="213"/>
        <end position="363"/>
    </location>
</feature>
<feature type="transmembrane region" description="Helical" evidence="2">
    <location>
        <begin position="364"/>
        <end position="383"/>
    </location>
</feature>
<feature type="topological domain" description="Extracellular" evidence="2">
    <location>
        <begin position="384"/>
        <end position="396"/>
    </location>
</feature>
<feature type="transmembrane region" description="Helical" evidence="2">
    <location>
        <begin position="397"/>
        <end position="418"/>
    </location>
</feature>
<feature type="topological domain" description="Cytoplasmic" evidence="2">
    <location>
        <begin position="419"/>
        <end position="887"/>
    </location>
</feature>
<feature type="transmembrane region" description="Helical" evidence="2">
    <location>
        <begin position="888"/>
        <end position="906"/>
    </location>
</feature>
<feature type="topological domain" description="Extracellular" evidence="2">
    <location>
        <begin position="907"/>
        <end position="915"/>
    </location>
</feature>
<feature type="transmembrane region" description="Helical" evidence="2">
    <location>
        <begin position="916"/>
        <end position="931"/>
    </location>
</feature>
<feature type="topological domain" description="Cytoplasmic" evidence="2">
    <location>
        <begin position="932"/>
        <end position="948"/>
    </location>
</feature>
<feature type="transmembrane region" description="Helical" evidence="2">
    <location>
        <begin position="949"/>
        <end position="972"/>
    </location>
</feature>
<feature type="topological domain" description="Extracellular" evidence="2">
    <location>
        <begin position="973"/>
        <end position="994"/>
    </location>
</feature>
<feature type="transmembrane region" description="Helical" evidence="2">
    <location>
        <begin position="995"/>
        <end position="1018"/>
    </location>
</feature>
<feature type="topological domain" description="Cytoplasmic" evidence="2">
    <location>
        <begin position="1019"/>
        <end position="1030"/>
    </location>
</feature>
<feature type="transmembrane region" description="Helical" evidence="2">
    <location>
        <begin position="1031"/>
        <end position="1050"/>
    </location>
</feature>
<feature type="topological domain" description="Extracellular" evidence="2">
    <location>
        <begin position="1051"/>
        <end position="1101"/>
    </location>
</feature>
<feature type="transmembrane region" description="Helical" evidence="2">
    <location>
        <begin position="1102"/>
        <end position="1124"/>
    </location>
</feature>
<feature type="topological domain" description="Cytoplasmic" evidence="2">
    <location>
        <begin position="1125"/>
        <end position="1133"/>
    </location>
</feature>
<feature type="active site" description="4-aspartylphosphate intermediate" evidence="1">
    <location>
        <position position="451"/>
    </location>
</feature>
<feature type="binding site" evidence="1">
    <location>
        <position position="827"/>
    </location>
    <ligand>
        <name>Mg(2+)</name>
        <dbReference type="ChEBI" id="CHEBI:18420"/>
    </ligand>
</feature>
<feature type="binding site" evidence="1">
    <location>
        <position position="831"/>
    </location>
    <ligand>
        <name>Mg(2+)</name>
        <dbReference type="ChEBI" id="CHEBI:18420"/>
    </ligand>
</feature>
<accession>Q95050</accession>
<evidence type="ECO:0000250" key="1"/>
<evidence type="ECO:0000255" key="2"/>
<evidence type="ECO:0000305" key="3"/>
<gene>
    <name type="primary">TPA9</name>
</gene>